<keyword id="KW-0131">Cell cycle</keyword>
<keyword id="KW-0132">Cell division</keyword>
<keyword id="KW-1003">Cell membrane</keyword>
<keyword id="KW-0472">Membrane</keyword>
<keyword id="KW-1185">Reference proteome</keyword>
<keyword id="KW-0812">Transmembrane</keyword>
<keyword id="KW-1133">Transmembrane helix</keyword>
<feature type="chain" id="PRO_0000414553" description="Cell division protein FtsL">
    <location>
        <begin position="1"/>
        <end position="120"/>
    </location>
</feature>
<feature type="topological domain" description="Cytoplasmic" evidence="1">
    <location>
        <begin position="1"/>
        <end position="36"/>
    </location>
</feature>
<feature type="transmembrane region" description="Helical" evidence="1">
    <location>
        <begin position="37"/>
        <end position="57"/>
    </location>
</feature>
<feature type="topological domain" description="Extracellular" evidence="1">
    <location>
        <begin position="58"/>
        <end position="120"/>
    </location>
</feature>
<gene>
    <name evidence="1" type="primary">ftsL</name>
    <name type="ordered locus">BC_3917</name>
</gene>
<reference key="1">
    <citation type="journal article" date="2003" name="Nature">
        <title>Genome sequence of Bacillus cereus and comparative analysis with Bacillus anthracis.</title>
        <authorList>
            <person name="Ivanova N."/>
            <person name="Sorokin A."/>
            <person name="Anderson I."/>
            <person name="Galleron N."/>
            <person name="Candelon B."/>
            <person name="Kapatral V."/>
            <person name="Bhattacharyya A."/>
            <person name="Reznik G."/>
            <person name="Mikhailova N."/>
            <person name="Lapidus A."/>
            <person name="Chu L."/>
            <person name="Mazur M."/>
            <person name="Goltsman E."/>
            <person name="Larsen N."/>
            <person name="D'Souza M."/>
            <person name="Walunas T."/>
            <person name="Grechkin Y."/>
            <person name="Pusch G."/>
            <person name="Haselkorn R."/>
            <person name="Fonstein M."/>
            <person name="Ehrlich S.D."/>
            <person name="Overbeek R."/>
            <person name="Kyrpides N.C."/>
        </authorList>
    </citation>
    <scope>NUCLEOTIDE SEQUENCE [LARGE SCALE GENOMIC DNA]</scope>
    <source>
        <strain>ATCC 14579 / DSM 31 / CCUG 7414 / JCM 2152 / NBRC 15305 / NCIMB 9373 / NCTC 2599 / NRRL B-3711</strain>
    </source>
</reference>
<accession>Q819P9</accession>
<name>FTSL_BACCR</name>
<protein>
    <recommendedName>
        <fullName evidence="1">Cell division protein FtsL</fullName>
    </recommendedName>
</protein>
<comment type="function">
    <text evidence="1">Essential cell division protein.</text>
</comment>
<comment type="subcellular location">
    <subcellularLocation>
        <location evidence="1">Cell membrane</location>
        <topology evidence="1">Single-pass type II membrane protein</topology>
    </subcellularLocation>
    <text evidence="1">Localizes to the division septum where it forms a ring structure.</text>
</comment>
<comment type="similarity">
    <text evidence="1">Belongs to the FtsL family.</text>
</comment>
<dbReference type="EMBL" id="AE016877">
    <property type="protein sequence ID" value="AAP10838.1"/>
    <property type="molecule type" value="Genomic_DNA"/>
</dbReference>
<dbReference type="RefSeq" id="NP_833637.1">
    <property type="nucleotide sequence ID" value="NC_004722.1"/>
</dbReference>
<dbReference type="RefSeq" id="WP_000182804.1">
    <property type="nucleotide sequence ID" value="NZ_CP138336.1"/>
</dbReference>
<dbReference type="SMR" id="Q819P9"/>
<dbReference type="STRING" id="226900.BC_3917"/>
<dbReference type="GeneID" id="72450599"/>
<dbReference type="KEGG" id="bce:BC3917"/>
<dbReference type="PATRIC" id="fig|226900.8.peg.4039"/>
<dbReference type="HOGENOM" id="CLU_157825_2_0_9"/>
<dbReference type="OrthoDB" id="2916778at2"/>
<dbReference type="Proteomes" id="UP000001417">
    <property type="component" value="Chromosome"/>
</dbReference>
<dbReference type="GO" id="GO:0032153">
    <property type="term" value="C:cell division site"/>
    <property type="evidence" value="ECO:0007669"/>
    <property type="project" value="UniProtKB-UniRule"/>
</dbReference>
<dbReference type="GO" id="GO:0005886">
    <property type="term" value="C:plasma membrane"/>
    <property type="evidence" value="ECO:0007669"/>
    <property type="project" value="UniProtKB-SubCell"/>
</dbReference>
<dbReference type="GO" id="GO:0043093">
    <property type="term" value="P:FtsZ-dependent cytokinesis"/>
    <property type="evidence" value="ECO:0007669"/>
    <property type="project" value="UniProtKB-UniRule"/>
</dbReference>
<dbReference type="HAMAP" id="MF_00910">
    <property type="entry name" value="FtsL"/>
    <property type="match status" value="1"/>
</dbReference>
<dbReference type="InterPro" id="IPR011922">
    <property type="entry name" value="Cell_div_FtsL"/>
</dbReference>
<dbReference type="InterPro" id="IPR007060">
    <property type="entry name" value="FtsL/DivIC"/>
</dbReference>
<dbReference type="NCBIfam" id="TIGR02209">
    <property type="entry name" value="ftsL_broad"/>
    <property type="match status" value="1"/>
</dbReference>
<dbReference type="Pfam" id="PF04977">
    <property type="entry name" value="DivIC"/>
    <property type="match status" value="1"/>
</dbReference>
<organism>
    <name type="scientific">Bacillus cereus (strain ATCC 14579 / DSM 31 / CCUG 7414 / JCM 2152 / NBRC 15305 / NCIMB 9373 / NCTC 2599 / NRRL B-3711)</name>
    <dbReference type="NCBI Taxonomy" id="226900"/>
    <lineage>
        <taxon>Bacteria</taxon>
        <taxon>Bacillati</taxon>
        <taxon>Bacillota</taxon>
        <taxon>Bacilli</taxon>
        <taxon>Bacillales</taxon>
        <taxon>Bacillaceae</taxon>
        <taxon>Bacillus</taxon>
        <taxon>Bacillus cereus group</taxon>
    </lineage>
</organism>
<proteinExistence type="inferred from homology"/>
<sequence length="120" mass="13616">MTNLAVKYKQQAQEEVQIQTPPQQMAKPKVKAKITRIEKLLYVAFIGFLLYACVAFIGNKAGLYQVNVEAATIEEKIVQQQKENQELQAEVEKLSRYERIAEVAKKHGLEINANNVKGLK</sequence>
<evidence type="ECO:0000255" key="1">
    <source>
        <dbReference type="HAMAP-Rule" id="MF_00910"/>
    </source>
</evidence>